<dbReference type="EC" id="5.99.-.-" evidence="2"/>
<dbReference type="EMBL" id="AC002986">
    <property type="protein sequence ID" value="AAC17039.1"/>
    <property type="molecule type" value="Genomic_DNA"/>
</dbReference>
<dbReference type="EMBL" id="CP002684">
    <property type="protein sequence ID" value="AEE36224.1"/>
    <property type="molecule type" value="Genomic_DNA"/>
</dbReference>
<dbReference type="EMBL" id="BT002660">
    <property type="protein sequence ID" value="AAO11576.1"/>
    <property type="molecule type" value="mRNA"/>
</dbReference>
<dbReference type="EMBL" id="AY048206">
    <property type="protein sequence ID" value="AAK82469.1"/>
    <property type="molecule type" value="mRNA"/>
</dbReference>
<dbReference type="PIR" id="T01031">
    <property type="entry name" value="T01031"/>
</dbReference>
<dbReference type="RefSeq" id="NP_565204.1">
    <property type="nucleotide sequence ID" value="NM_106576.4"/>
</dbReference>
<dbReference type="PDB" id="2A13">
    <property type="method" value="X-ray"/>
    <property type="resolution" value="1.32 A"/>
    <property type="chains" value="A=2-166"/>
</dbReference>
<dbReference type="PDB" id="2Q4N">
    <property type="method" value="X-ray"/>
    <property type="resolution" value="1.32 A"/>
    <property type="chains" value="A=2-166"/>
</dbReference>
<dbReference type="PDB" id="3EMM">
    <property type="method" value="X-ray"/>
    <property type="resolution" value="1.36 A"/>
    <property type="chains" value="A=1-166"/>
</dbReference>
<dbReference type="PDB" id="3WJB">
    <property type="method" value="X-ray"/>
    <property type="resolution" value="2.20 A"/>
    <property type="chains" value="A/B=2-166"/>
</dbReference>
<dbReference type="PDB" id="3WJC">
    <property type="method" value="X-ray"/>
    <property type="resolution" value="2.00 A"/>
    <property type="chains" value="A/B=2-166"/>
</dbReference>
<dbReference type="PDB" id="3WJD">
    <property type="method" value="X-ray"/>
    <property type="resolution" value="1.10 A"/>
    <property type="chains" value="A=2-166"/>
</dbReference>
<dbReference type="PDB" id="3WJE">
    <property type="method" value="X-ray"/>
    <property type="resolution" value="1.70 A"/>
    <property type="chains" value="A/B=2-166"/>
</dbReference>
<dbReference type="PDB" id="3WJF">
    <property type="method" value="X-ray"/>
    <property type="resolution" value="2.20 A"/>
    <property type="chains" value="A/B=2-166"/>
</dbReference>
<dbReference type="PDB" id="3WJG">
    <property type="method" value="X-ray"/>
    <property type="resolution" value="1.10 A"/>
    <property type="chains" value="A=2-166"/>
</dbReference>
<dbReference type="PDB" id="4YMY">
    <property type="method" value="X-ray"/>
    <property type="resolution" value="1.00 A"/>
    <property type="chains" value="A=2-166"/>
</dbReference>
<dbReference type="PDB" id="7BBM">
    <property type="method" value="X-ray"/>
    <property type="resolution" value="1.14 A"/>
    <property type="chains" value="A=1-166"/>
</dbReference>
<dbReference type="PDBsum" id="2A13"/>
<dbReference type="PDBsum" id="2Q4N"/>
<dbReference type="PDBsum" id="3EMM"/>
<dbReference type="PDBsum" id="3WJB"/>
<dbReference type="PDBsum" id="3WJC"/>
<dbReference type="PDBsum" id="3WJD"/>
<dbReference type="PDBsum" id="3WJE"/>
<dbReference type="PDBsum" id="3WJF"/>
<dbReference type="PDBsum" id="3WJG"/>
<dbReference type="PDBsum" id="4YMY"/>
<dbReference type="PDBsum" id="7BBM"/>
<dbReference type="SMR" id="O64527"/>
<dbReference type="FunCoup" id="O64527">
    <property type="interactions" value="105"/>
</dbReference>
<dbReference type="STRING" id="3702.O64527"/>
<dbReference type="PaxDb" id="3702-AT1G79260.1"/>
<dbReference type="ProteomicsDB" id="232389"/>
<dbReference type="DNASU" id="844266"/>
<dbReference type="EnsemblPlants" id="AT1G79260.1">
    <property type="protein sequence ID" value="AT1G79260.1"/>
    <property type="gene ID" value="AT1G79260"/>
</dbReference>
<dbReference type="GeneID" id="844266"/>
<dbReference type="Gramene" id="AT1G79260.1">
    <property type="protein sequence ID" value="AT1G79260.1"/>
    <property type="gene ID" value="AT1G79260"/>
</dbReference>
<dbReference type="KEGG" id="ath:AT1G79260"/>
<dbReference type="Araport" id="AT1G79260"/>
<dbReference type="TAIR" id="AT1G79260"/>
<dbReference type="eggNOG" id="KOG3371">
    <property type="taxonomic scope" value="Eukaryota"/>
</dbReference>
<dbReference type="HOGENOM" id="CLU_085483_1_1_1"/>
<dbReference type="InParanoid" id="O64527"/>
<dbReference type="PhylomeDB" id="O64527"/>
<dbReference type="EvolutionaryTrace" id="O64527"/>
<dbReference type="PRO" id="PR:O64527"/>
<dbReference type="Proteomes" id="UP000006548">
    <property type="component" value="Chromosome 1"/>
</dbReference>
<dbReference type="ExpressionAtlas" id="O64527">
    <property type="expression patterns" value="baseline and differential"/>
</dbReference>
<dbReference type="GO" id="GO:0005829">
    <property type="term" value="C:cytosol"/>
    <property type="evidence" value="ECO:0007005"/>
    <property type="project" value="TAIR"/>
</dbReference>
<dbReference type="GO" id="GO:0016853">
    <property type="term" value="F:isomerase activity"/>
    <property type="evidence" value="ECO:0007669"/>
    <property type="project" value="UniProtKB-KW"/>
</dbReference>
<dbReference type="GO" id="GO:0046872">
    <property type="term" value="F:metal ion binding"/>
    <property type="evidence" value="ECO:0007669"/>
    <property type="project" value="UniProtKB-KW"/>
</dbReference>
<dbReference type="CDD" id="cd07828">
    <property type="entry name" value="lipocalin_heme-bd-THAP4-like"/>
    <property type="match status" value="1"/>
</dbReference>
<dbReference type="FunFam" id="2.40.128.20:FF:000039">
    <property type="entry name" value="UPF0678 fatty acid-binding protein-like protein At1g79260"/>
    <property type="match status" value="1"/>
</dbReference>
<dbReference type="Gene3D" id="2.40.128.20">
    <property type="match status" value="1"/>
</dbReference>
<dbReference type="InterPro" id="IPR012674">
    <property type="entry name" value="Calycin"/>
</dbReference>
<dbReference type="InterPro" id="IPR045165">
    <property type="entry name" value="Nitrobindin"/>
</dbReference>
<dbReference type="InterPro" id="IPR014878">
    <property type="entry name" value="THAP4-like_heme-bd"/>
</dbReference>
<dbReference type="PANTHER" id="PTHR15854:SF4">
    <property type="entry name" value="PEROXYNITRITE ISOMERASE THAP4"/>
    <property type="match status" value="1"/>
</dbReference>
<dbReference type="PANTHER" id="PTHR15854">
    <property type="entry name" value="THAP4 PROTEIN"/>
    <property type="match status" value="1"/>
</dbReference>
<dbReference type="Pfam" id="PF08768">
    <property type="entry name" value="THAP4_heme-bd"/>
    <property type="match status" value="1"/>
</dbReference>
<dbReference type="SUPFAM" id="SSF50814">
    <property type="entry name" value="Lipocalins"/>
    <property type="match status" value="1"/>
</dbReference>
<accession>O64527</accession>
<comment type="function">
    <text evidence="1 2">Heme-binding protein able to scavenge peroxynitrite and to protect free L-tyrosine against peroxynitrite-mediated nitration, by acting as a peroxynitrite isomerase that converts peroxynitrite to nitrate. Therefore, this protein likely plays a role in peroxynitrite sensing and in the detoxification of reactive nitrogen and oxygen species (RNS and ROS, respectively) (PubMed:32295384). Is able to bind nitric oxide (NO) in vitro, but may act as a sensor of peroxynitrite levels in vivo (PubMed:19938152, PubMed:32295384).</text>
</comment>
<comment type="catalytic activity">
    <reaction evidence="2">
        <text>peroxynitrite = nitrate</text>
        <dbReference type="Rhea" id="RHEA:63116"/>
        <dbReference type="ChEBI" id="CHEBI:17632"/>
        <dbReference type="ChEBI" id="CHEBI:25941"/>
    </reaction>
    <physiologicalReaction direction="left-to-right" evidence="5">
        <dbReference type="Rhea" id="RHEA:63117"/>
    </physiologicalReaction>
</comment>
<comment type="cofactor">
    <cofactor evidence="1">
        <name>heme b</name>
        <dbReference type="ChEBI" id="CHEBI:60344"/>
    </cofactor>
    <text evidence="1">Binds 1 heme b group per subunit, that coordinates a highly solvent-exposed Fe(III) atom.</text>
</comment>
<comment type="pathway">
    <text evidence="5">Nitrogen metabolism.</text>
</comment>
<comment type="subunit">
    <text evidence="1">Homodimer.</text>
</comment>
<comment type="subcellular location">
    <subcellularLocation>
        <location evidence="4">Cytoplasm</location>
    </subcellularLocation>
</comment>
<comment type="domain">
    <text evidence="1">Forms a 10-stranded antiparallel beta-barrel structure able to accommodate a hydrophobic ligand in its interior. In fact, this fold hosts the heme group, which is located in a wide surface cleft.</text>
</comment>
<comment type="similarity">
    <text evidence="4">Belongs to the nitrobindin family.</text>
</comment>
<keyword id="KW-0002">3D-structure</keyword>
<keyword id="KW-0963">Cytoplasm</keyword>
<keyword id="KW-0349">Heme</keyword>
<keyword id="KW-0408">Iron</keyword>
<keyword id="KW-0413">Isomerase</keyword>
<keyword id="KW-0479">Metal-binding</keyword>
<keyword id="KW-1185">Reference proteome</keyword>
<reference key="1">
    <citation type="journal article" date="2000" name="Nature">
        <title>Sequence and analysis of chromosome 1 of the plant Arabidopsis thaliana.</title>
        <authorList>
            <person name="Theologis A."/>
            <person name="Ecker J.R."/>
            <person name="Palm C.J."/>
            <person name="Federspiel N.A."/>
            <person name="Kaul S."/>
            <person name="White O."/>
            <person name="Alonso J."/>
            <person name="Altafi H."/>
            <person name="Araujo R."/>
            <person name="Bowman C.L."/>
            <person name="Brooks S.Y."/>
            <person name="Buehler E."/>
            <person name="Chan A."/>
            <person name="Chao Q."/>
            <person name="Chen H."/>
            <person name="Cheuk R.F."/>
            <person name="Chin C.W."/>
            <person name="Chung M.K."/>
            <person name="Conn L."/>
            <person name="Conway A.B."/>
            <person name="Conway A.R."/>
            <person name="Creasy T.H."/>
            <person name="Dewar K."/>
            <person name="Dunn P."/>
            <person name="Etgu P."/>
            <person name="Feldblyum T.V."/>
            <person name="Feng J.-D."/>
            <person name="Fong B."/>
            <person name="Fujii C.Y."/>
            <person name="Gill J.E."/>
            <person name="Goldsmith A.D."/>
            <person name="Haas B."/>
            <person name="Hansen N.F."/>
            <person name="Hughes B."/>
            <person name="Huizar L."/>
            <person name="Hunter J.L."/>
            <person name="Jenkins J."/>
            <person name="Johnson-Hopson C."/>
            <person name="Khan S."/>
            <person name="Khaykin E."/>
            <person name="Kim C.J."/>
            <person name="Koo H.L."/>
            <person name="Kremenetskaia I."/>
            <person name="Kurtz D.B."/>
            <person name="Kwan A."/>
            <person name="Lam B."/>
            <person name="Langin-Hooper S."/>
            <person name="Lee A."/>
            <person name="Lee J.M."/>
            <person name="Lenz C.A."/>
            <person name="Li J.H."/>
            <person name="Li Y.-P."/>
            <person name="Lin X."/>
            <person name="Liu S.X."/>
            <person name="Liu Z.A."/>
            <person name="Luros J.S."/>
            <person name="Maiti R."/>
            <person name="Marziali A."/>
            <person name="Militscher J."/>
            <person name="Miranda M."/>
            <person name="Nguyen M."/>
            <person name="Nierman W.C."/>
            <person name="Osborne B.I."/>
            <person name="Pai G."/>
            <person name="Peterson J."/>
            <person name="Pham P.K."/>
            <person name="Rizzo M."/>
            <person name="Rooney T."/>
            <person name="Rowley D."/>
            <person name="Sakano H."/>
            <person name="Salzberg S.L."/>
            <person name="Schwartz J.R."/>
            <person name="Shinn P."/>
            <person name="Southwick A.M."/>
            <person name="Sun H."/>
            <person name="Tallon L.J."/>
            <person name="Tambunga G."/>
            <person name="Toriumi M.J."/>
            <person name="Town C.D."/>
            <person name="Utterback T."/>
            <person name="Van Aken S."/>
            <person name="Vaysberg M."/>
            <person name="Vysotskaia V.S."/>
            <person name="Walker M."/>
            <person name="Wu D."/>
            <person name="Yu G."/>
            <person name="Fraser C.M."/>
            <person name="Venter J.C."/>
            <person name="Davis R.W."/>
        </authorList>
    </citation>
    <scope>NUCLEOTIDE SEQUENCE [LARGE SCALE GENOMIC DNA]</scope>
    <source>
        <strain>cv. Columbia</strain>
    </source>
</reference>
<reference key="2">
    <citation type="journal article" date="2017" name="Plant J.">
        <title>Araport11: a complete reannotation of the Arabidopsis thaliana reference genome.</title>
        <authorList>
            <person name="Cheng C.Y."/>
            <person name="Krishnakumar V."/>
            <person name="Chan A.P."/>
            <person name="Thibaud-Nissen F."/>
            <person name="Schobel S."/>
            <person name="Town C.D."/>
        </authorList>
    </citation>
    <scope>GENOME REANNOTATION</scope>
    <source>
        <strain>cv. Columbia</strain>
    </source>
</reference>
<reference key="3">
    <citation type="journal article" date="2003" name="Science">
        <title>Empirical analysis of transcriptional activity in the Arabidopsis genome.</title>
        <authorList>
            <person name="Yamada K."/>
            <person name="Lim J."/>
            <person name="Dale J.M."/>
            <person name="Chen H."/>
            <person name="Shinn P."/>
            <person name="Palm C.J."/>
            <person name="Southwick A.M."/>
            <person name="Wu H.C."/>
            <person name="Kim C.J."/>
            <person name="Nguyen M."/>
            <person name="Pham P.K."/>
            <person name="Cheuk R.F."/>
            <person name="Karlin-Newmann G."/>
            <person name="Liu S.X."/>
            <person name="Lam B."/>
            <person name="Sakano H."/>
            <person name="Wu T."/>
            <person name="Yu G."/>
            <person name="Miranda M."/>
            <person name="Quach H.L."/>
            <person name="Tripp M."/>
            <person name="Chang C.H."/>
            <person name="Lee J.M."/>
            <person name="Toriumi M.J."/>
            <person name="Chan M.M."/>
            <person name="Tang C.C."/>
            <person name="Onodera C.S."/>
            <person name="Deng J.M."/>
            <person name="Akiyama K."/>
            <person name="Ansari Y."/>
            <person name="Arakawa T."/>
            <person name="Banh J."/>
            <person name="Banno F."/>
            <person name="Bowser L."/>
            <person name="Brooks S.Y."/>
            <person name="Carninci P."/>
            <person name="Chao Q."/>
            <person name="Choy N."/>
            <person name="Enju A."/>
            <person name="Goldsmith A.D."/>
            <person name="Gurjal M."/>
            <person name="Hansen N.F."/>
            <person name="Hayashizaki Y."/>
            <person name="Johnson-Hopson C."/>
            <person name="Hsuan V.W."/>
            <person name="Iida K."/>
            <person name="Karnes M."/>
            <person name="Khan S."/>
            <person name="Koesema E."/>
            <person name="Ishida J."/>
            <person name="Jiang P.X."/>
            <person name="Jones T."/>
            <person name="Kawai J."/>
            <person name="Kamiya A."/>
            <person name="Meyers C."/>
            <person name="Nakajima M."/>
            <person name="Narusaka M."/>
            <person name="Seki M."/>
            <person name="Sakurai T."/>
            <person name="Satou M."/>
            <person name="Tamse R."/>
            <person name="Vaysberg M."/>
            <person name="Wallender E.K."/>
            <person name="Wong C."/>
            <person name="Yamamura Y."/>
            <person name="Yuan S."/>
            <person name="Shinozaki K."/>
            <person name="Davis R.W."/>
            <person name="Theologis A."/>
            <person name="Ecker J.R."/>
        </authorList>
    </citation>
    <scope>NUCLEOTIDE SEQUENCE [LARGE SCALE MRNA]</scope>
    <source>
        <strain>cv. Columbia</strain>
    </source>
</reference>
<reference key="4">
    <citation type="journal article" date="2020" name="Antioxid. Redox Signal.">
        <title>Mycobacterial and Human Nitrobindins: Structure and Function.</title>
        <authorList>
            <person name="De Simone G."/>
            <person name="di Masi A."/>
            <person name="Vita G.M."/>
            <person name="Polticelli F."/>
            <person name="Pesce A."/>
            <person name="Nardini M."/>
            <person name="Bolognesi M."/>
            <person name="Ciaccio C."/>
            <person name="Coletta M."/>
            <person name="Turilli E.S."/>
            <person name="Fasano M."/>
            <person name="Tognaccini L."/>
            <person name="Smulevich G."/>
            <person name="Abbruzzetti S."/>
            <person name="Viappiani C."/>
            <person name="Bruno S."/>
            <person name="Ascenzi P."/>
        </authorList>
    </citation>
    <scope>FUNCTION</scope>
    <scope>CATALYTIC ACTIVITY</scope>
    <scope>NO-BINDING</scope>
</reference>
<reference key="5">
    <citation type="submission" date="2005-02" db="PDB data bank">
        <title>X-ray structure of protein from Arabidopsis thaliana At1g79260.</title>
        <authorList>
            <consortium name="Center for eukaryotic structural genomics (CESG)"/>
        </authorList>
    </citation>
    <scope>X-RAY CRYSTALLOGRAPHY (1.32 ANGSTROMS) OF 2-166</scope>
</reference>
<reference key="6">
    <citation type="journal article" date="2007" name="Structure">
        <title>Ensemble refinement of protein crystal structures: validation and application.</title>
        <authorList>
            <person name="Levin E.J."/>
            <person name="Kondrashov D.A."/>
            <person name="Wesenberg G.E."/>
            <person name="Phillips G.N. Jr."/>
        </authorList>
    </citation>
    <scope>X-RAY CRYSTALLOGRAPHY (1.32 ANGSTROMS) OF 2-166</scope>
</reference>
<reference evidence="6 7" key="7">
    <citation type="journal article" date="2010" name="Proteins">
        <title>The structure and NO binding properties of the nitrophorin-like heme-binding protein from Arabidopsis thaliana gene locus At1g79260.1.</title>
        <authorList>
            <person name="Bianchetti C.M."/>
            <person name="Blouin G.C."/>
            <person name="Bitto E."/>
            <person name="Olson J.S."/>
            <person name="Phillips G.N. Jr."/>
        </authorList>
    </citation>
    <scope>X-RAY CRYSTALLOGRAPHY (1.32 ANGSTROMS) OF 2-166 IN COMPLEX WITH HEME</scope>
    <scope>COFACTOR</scope>
    <scope>NO-BINDING</scope>
    <scope>SUBUNIT</scope>
</reference>
<sequence length="166" mass="18486">MNQLQQLQNPGESPPVHPFVAPLSYLLGTWRGQGEGEYPTIPSFRYGEEIRFSHSGKPVIAYTQKTWKLESGAPMHAESGYFRPRPDGSIEVVIAQSTGLVEVQKGTYNVDEQSIKLKSDLVGNASKVKEISREFELVDGKLSYVVRMSTTTNPLQPHLKAILDKL</sequence>
<feature type="chain" id="PRO_0000250540" description="Peroxynitrite isomerase Rv2717c">
    <location>
        <begin position="1"/>
        <end position="166"/>
    </location>
</feature>
<feature type="short sequence motif" description="GXWXGXG">
    <location>
        <begin position="28"/>
        <end position="34"/>
    </location>
</feature>
<feature type="binding site" evidence="1 7">
    <location>
        <position position="40"/>
    </location>
    <ligand>
        <name>heme b</name>
        <dbReference type="ChEBI" id="CHEBI:60344"/>
    </ligand>
</feature>
<feature type="binding site" description="axial binding residue" evidence="1 7">
    <location>
        <position position="158"/>
    </location>
    <ligand>
        <name>heme b</name>
        <dbReference type="ChEBI" id="CHEBI:60344"/>
    </ligand>
    <ligandPart>
        <name>Fe</name>
        <dbReference type="ChEBI" id="CHEBI:18248"/>
    </ligandPart>
</feature>
<feature type="turn" evidence="9">
    <location>
        <begin position="18"/>
        <end position="20"/>
    </location>
</feature>
<feature type="helix" evidence="9">
    <location>
        <begin position="21"/>
        <end position="26"/>
    </location>
</feature>
<feature type="strand" evidence="9">
    <location>
        <begin position="28"/>
        <end position="38"/>
    </location>
</feature>
<feature type="strand" evidence="9">
    <location>
        <begin position="41"/>
        <end position="53"/>
    </location>
</feature>
<feature type="strand" evidence="9">
    <location>
        <begin position="56"/>
        <end position="58"/>
    </location>
</feature>
<feature type="strand" evidence="9">
    <location>
        <begin position="60"/>
        <end position="67"/>
    </location>
</feature>
<feature type="turn" evidence="9">
    <location>
        <begin position="69"/>
        <end position="71"/>
    </location>
</feature>
<feature type="strand" evidence="9">
    <location>
        <begin position="74"/>
        <end position="84"/>
    </location>
</feature>
<feature type="strand" evidence="9">
    <location>
        <begin position="88"/>
        <end position="96"/>
    </location>
</feature>
<feature type="turn" evidence="8">
    <location>
        <begin position="97"/>
        <end position="99"/>
    </location>
</feature>
<feature type="strand" evidence="9">
    <location>
        <begin position="101"/>
        <end position="109"/>
    </location>
</feature>
<feature type="turn" evidence="9">
    <location>
        <begin position="110"/>
        <end position="113"/>
    </location>
</feature>
<feature type="strand" evidence="9">
    <location>
        <begin position="114"/>
        <end position="124"/>
    </location>
</feature>
<feature type="strand" evidence="9">
    <location>
        <begin position="126"/>
        <end position="138"/>
    </location>
</feature>
<feature type="strand" evidence="9">
    <location>
        <begin position="141"/>
        <end position="153"/>
    </location>
</feature>
<feature type="strand" evidence="9">
    <location>
        <begin position="155"/>
        <end position="165"/>
    </location>
</feature>
<gene>
    <name type="ordered locus">At1g79260</name>
    <name type="ORF">YUP8H12R.14</name>
</gene>
<evidence type="ECO:0000269" key="1">
    <source>
    </source>
</evidence>
<evidence type="ECO:0000269" key="2">
    <source>
    </source>
</evidence>
<evidence type="ECO:0000303" key="3">
    <source>
    </source>
</evidence>
<evidence type="ECO:0000305" key="4"/>
<evidence type="ECO:0000305" key="5">
    <source>
    </source>
</evidence>
<evidence type="ECO:0007744" key="6">
    <source>
        <dbReference type="PDB" id="2A13"/>
    </source>
</evidence>
<evidence type="ECO:0007744" key="7">
    <source>
        <dbReference type="PDB" id="3EMM"/>
    </source>
</evidence>
<evidence type="ECO:0007829" key="8">
    <source>
        <dbReference type="PDB" id="3WJC"/>
    </source>
</evidence>
<evidence type="ECO:0007829" key="9">
    <source>
        <dbReference type="PDB" id="4YMY"/>
    </source>
</evidence>
<protein>
    <recommendedName>
        <fullName evidence="5">Peroxynitrite isomerase Rv2717c</fullName>
        <ecNumber evidence="2">5.99.-.-</ecNumber>
    </recommendedName>
    <alternativeName>
        <fullName evidence="3">Ferric Arabidopsis thaliana nitrobindin</fullName>
        <shortName evidence="3">At-Nb(III)</shortName>
    </alternativeName>
</protein>
<name>NB_ARATH</name>
<organism>
    <name type="scientific">Arabidopsis thaliana</name>
    <name type="common">Mouse-ear cress</name>
    <dbReference type="NCBI Taxonomy" id="3702"/>
    <lineage>
        <taxon>Eukaryota</taxon>
        <taxon>Viridiplantae</taxon>
        <taxon>Streptophyta</taxon>
        <taxon>Embryophyta</taxon>
        <taxon>Tracheophyta</taxon>
        <taxon>Spermatophyta</taxon>
        <taxon>Magnoliopsida</taxon>
        <taxon>eudicotyledons</taxon>
        <taxon>Gunneridae</taxon>
        <taxon>Pentapetalae</taxon>
        <taxon>rosids</taxon>
        <taxon>malvids</taxon>
        <taxon>Brassicales</taxon>
        <taxon>Brassicaceae</taxon>
        <taxon>Camelineae</taxon>
        <taxon>Arabidopsis</taxon>
    </lineage>
</organism>
<proteinExistence type="evidence at protein level"/>